<keyword id="KW-0325">Glycoprotein</keyword>
<keyword id="KW-1185">Reference proteome</keyword>
<keyword id="KW-0732">Signal</keyword>
<evidence type="ECO:0000255" key="1"/>
<evidence type="ECO:0000255" key="2">
    <source>
        <dbReference type="PROSITE-ProRule" id="PRU00498"/>
    </source>
</evidence>
<evidence type="ECO:0000256" key="3">
    <source>
        <dbReference type="SAM" id="MobiDB-lite"/>
    </source>
</evidence>
<evidence type="ECO:0000269" key="4">
    <source>
    </source>
</evidence>
<evidence type="ECO:0000269" key="5">
    <source>
    </source>
</evidence>
<evidence type="ECO:0000269" key="6">
    <source>
    </source>
</evidence>
<evidence type="ECO:0000303" key="7">
    <source>
    </source>
</evidence>
<evidence type="ECO:0000305" key="8"/>
<evidence type="ECO:0000312" key="9">
    <source>
        <dbReference type="Araport" id="AT3G22640"/>
    </source>
</evidence>
<evidence type="ECO:0000312" key="10">
    <source>
        <dbReference type="EMBL" id="BAB01239.1"/>
    </source>
</evidence>
<protein>
    <recommendedName>
        <fullName>Vicilin-like seed storage protein At3g22640</fullName>
    </recommendedName>
    <alternativeName>
        <fullName>Globulin At3g22640</fullName>
    </alternativeName>
</protein>
<dbReference type="EMBL" id="AB022223">
    <property type="protein sequence ID" value="BAB01239.1"/>
    <property type="molecule type" value="Genomic_DNA"/>
</dbReference>
<dbReference type="EMBL" id="CP002686">
    <property type="protein sequence ID" value="AEE76660.1"/>
    <property type="molecule type" value="Genomic_DNA"/>
</dbReference>
<dbReference type="EMBL" id="AY058085">
    <property type="protein sequence ID" value="AAL24193.1"/>
    <property type="molecule type" value="mRNA"/>
</dbReference>
<dbReference type="EMBL" id="AY090307">
    <property type="protein sequence ID" value="AAL90968.1"/>
    <property type="molecule type" value="mRNA"/>
</dbReference>
<dbReference type="EMBL" id="Z27025">
    <property type="protein sequence ID" value="CAA81568.1"/>
    <property type="molecule type" value="mRNA"/>
</dbReference>
<dbReference type="EMBL" id="Z27252">
    <property type="protein sequence ID" value="CAA81765.1"/>
    <property type="molecule type" value="mRNA"/>
</dbReference>
<dbReference type="EMBL" id="Z29841">
    <property type="protein sequence ID" value="CAA82813.1"/>
    <property type="molecule type" value="mRNA"/>
</dbReference>
<dbReference type="EMBL" id="Z46695">
    <property type="protein sequence ID" value="CAA86672.1"/>
    <property type="molecule type" value="mRNA"/>
</dbReference>
<dbReference type="EMBL" id="AK222092">
    <property type="protein sequence ID" value="BAD94983.1"/>
    <property type="molecule type" value="mRNA"/>
</dbReference>
<dbReference type="RefSeq" id="NP_566714.1">
    <property type="nucleotide sequence ID" value="NM_113163.4"/>
</dbReference>
<dbReference type="SMR" id="Q9LUJ7"/>
<dbReference type="FunCoup" id="Q9LUJ7">
    <property type="interactions" value="172"/>
</dbReference>
<dbReference type="STRING" id="3702.Q9LUJ7"/>
<dbReference type="GlyCosmos" id="Q9LUJ7">
    <property type="glycosylation" value="3 sites, No reported glycans"/>
</dbReference>
<dbReference type="GlyGen" id="Q9LUJ7">
    <property type="glycosylation" value="3 sites"/>
</dbReference>
<dbReference type="PaxDb" id="3702-AT3G22640.1"/>
<dbReference type="ProMEX" id="Q9LUJ7"/>
<dbReference type="ProteomicsDB" id="236834"/>
<dbReference type="EnsemblPlants" id="AT3G22640.1">
    <property type="protein sequence ID" value="AT3G22640.1"/>
    <property type="gene ID" value="AT3G22640"/>
</dbReference>
<dbReference type="GeneID" id="821835"/>
<dbReference type="Gramene" id="AT3G22640.1">
    <property type="protein sequence ID" value="AT3G22640.1"/>
    <property type="gene ID" value="AT3G22640"/>
</dbReference>
<dbReference type="KEGG" id="ath:AT3G22640"/>
<dbReference type="Araport" id="AT3G22640"/>
<dbReference type="TAIR" id="AT3G22640">
    <property type="gene designation" value="PAP85"/>
</dbReference>
<dbReference type="eggNOG" id="ENOG502QQEP">
    <property type="taxonomic scope" value="Eukaryota"/>
</dbReference>
<dbReference type="HOGENOM" id="CLU_018703_1_1_1"/>
<dbReference type="InParanoid" id="Q9LUJ7"/>
<dbReference type="OMA" id="CARFEMA"/>
<dbReference type="PhylomeDB" id="Q9LUJ7"/>
<dbReference type="PRO" id="PR:Q9LUJ7"/>
<dbReference type="Proteomes" id="UP000006548">
    <property type="component" value="Chromosome 3"/>
</dbReference>
<dbReference type="ExpressionAtlas" id="Q9LUJ7">
    <property type="expression patterns" value="baseline and differential"/>
</dbReference>
<dbReference type="GO" id="GO:0009615">
    <property type="term" value="P:response to virus"/>
    <property type="evidence" value="ECO:0000314"/>
    <property type="project" value="UniProtKB"/>
</dbReference>
<dbReference type="CDD" id="cd02245">
    <property type="entry name" value="cupin_7S_vicilin-like_C"/>
    <property type="match status" value="1"/>
</dbReference>
<dbReference type="CDD" id="cd02244">
    <property type="entry name" value="cupin_7S_vicilin-like_N"/>
    <property type="match status" value="1"/>
</dbReference>
<dbReference type="Gene3D" id="2.60.120.10">
    <property type="entry name" value="Jelly Rolls"/>
    <property type="match status" value="2"/>
</dbReference>
<dbReference type="InterPro" id="IPR006045">
    <property type="entry name" value="Cupin_1"/>
</dbReference>
<dbReference type="InterPro" id="IPR014710">
    <property type="entry name" value="RmlC-like_jellyroll"/>
</dbReference>
<dbReference type="InterPro" id="IPR011051">
    <property type="entry name" value="RmlC_Cupin_sf"/>
</dbReference>
<dbReference type="InterPro" id="IPR050253">
    <property type="entry name" value="Seed_Storage-Functional"/>
</dbReference>
<dbReference type="PANTHER" id="PTHR31189">
    <property type="entry name" value="OS03G0336100 PROTEIN-RELATED"/>
    <property type="match status" value="1"/>
</dbReference>
<dbReference type="PANTHER" id="PTHR31189:SF41">
    <property type="entry name" value="VICILIN C72"/>
    <property type="match status" value="1"/>
</dbReference>
<dbReference type="Pfam" id="PF00190">
    <property type="entry name" value="Cupin_1"/>
    <property type="match status" value="2"/>
</dbReference>
<dbReference type="SMART" id="SM00835">
    <property type="entry name" value="Cupin_1"/>
    <property type="match status" value="2"/>
</dbReference>
<dbReference type="SUPFAM" id="SSF51182">
    <property type="entry name" value="RmlC-like cupins"/>
    <property type="match status" value="1"/>
</dbReference>
<name>PAP85_ARATH</name>
<comment type="function">
    <text evidence="8">Seed storage protein.</text>
</comment>
<comment type="function">
    <text evidence="5">(Microbial infection) Involved in tobacco mosaic virus (TMV) replication. Required for endoplasmic reticulum (ER) aggregations mediated by TMV main replicase (P126) upon viral infection.</text>
</comment>
<comment type="tissue specificity">
    <text evidence="4 6">Predominantly expressed in the embryo and endosperm of developing seeds (PubMed:19014699, PubMed:7827492). Also present in seedlings (PubMed:19014699).</text>
</comment>
<comment type="developmental stage">
    <text evidence="4">First observed at 5 days post anthesis (DPA). Accumulates throughout subsequent stages of embryo development, in embryonic tissues such as cotyledons and embryo axis as well as in the endosperm. In young seedlings, strictly confined to the cotyledons, hypocotyl and root tip, 3-4 days after germination. Also detected in the trichomes of new leaves.</text>
</comment>
<comment type="induction">
    <text evidence="5">(Microbial infection) Accumulates after 0.5 to 6 hours of tobacco mosaic virus (TMV) infection.</text>
</comment>
<comment type="disruption phenotype">
    <text evidence="5">(Microbial infection) Reduced tobacco mosaic virus (TMV) accumulation associated with altered endoplasmic reticulum (ER) transition in TMV-infected cells.</text>
</comment>
<comment type="similarity">
    <text evidence="8">Belongs to the 7S seed storage protein family.</text>
</comment>
<gene>
    <name evidence="7" type="primary">PAP85</name>
    <name evidence="9" type="ordered locus">At3g22640</name>
    <name evidence="10" type="ORF">MWI23.1</name>
</gene>
<proteinExistence type="evidence at transcript level"/>
<accession>Q9LUJ7</accession>
<accession>Q42160</accession>
<accession>Q42174</accession>
<accession>Q42222</accession>
<accession>Q42326</accession>
<accession>Q56WF0</accession>
<organism>
    <name type="scientific">Arabidopsis thaliana</name>
    <name type="common">Mouse-ear cress</name>
    <dbReference type="NCBI Taxonomy" id="3702"/>
    <lineage>
        <taxon>Eukaryota</taxon>
        <taxon>Viridiplantae</taxon>
        <taxon>Streptophyta</taxon>
        <taxon>Embryophyta</taxon>
        <taxon>Tracheophyta</taxon>
        <taxon>Spermatophyta</taxon>
        <taxon>Magnoliopsida</taxon>
        <taxon>eudicotyledons</taxon>
        <taxon>Gunneridae</taxon>
        <taxon>Pentapetalae</taxon>
        <taxon>rosids</taxon>
        <taxon>malvids</taxon>
        <taxon>Brassicales</taxon>
        <taxon>Brassicaceae</taxon>
        <taxon>Camelineae</taxon>
        <taxon>Arabidopsis</taxon>
    </lineage>
</organism>
<sequence>MAITNKLIITLLLLISIAVVHCLSFRVEIDEFEPPQQGEQEGPRRRPGGGSGEGWEEESTNHPYHFRKRSFSDWFQSKEGFVRVLPKFTKHAPALFRGIENYRFSLVEMEPTTFFVPHHLDADAVFIVLQGKGVIEFVTDKTKESFHITKGDVVRIPSGVTNFITNTNQTVPLRLAQITVPVNNPGNYKDYFPAASQFQQSYFNGFTKEVLSTSFNVPEELLGRLVTRSKEIGQGIIRRISPDQIKELAEHATSPSNKHKAKKEKEEDKDLRTLWTPFNLFAIDPIYSNDFGHFHEAHPKNYNQLQDLHIAAAWANMTQGSLFLPHFNSKTTFVTFVENGCARFEMATPYKFQRGQQQWPGQGQEEEEDMSENVHKVVSRVCKGEVFIVPAGHPFTILSQDQDFIAVGFGIYATNSKRTFLAGEENLLSNLNPAATRVTFGVGSKVAEKLFTSQNYSYFAPTSRSQQQIPEKHKPSFQSILDFAGF</sequence>
<reference key="1">
    <citation type="journal article" date="2000" name="DNA Res.">
        <title>Structural analysis of Arabidopsis thaliana chromosome 3. I. Sequence features of the regions of 4,504,864 bp covered by sixty P1 and TAC clones.</title>
        <authorList>
            <person name="Sato S."/>
            <person name="Nakamura Y."/>
            <person name="Kaneko T."/>
            <person name="Katoh T."/>
            <person name="Asamizu E."/>
            <person name="Tabata S."/>
        </authorList>
    </citation>
    <scope>NUCLEOTIDE SEQUENCE [LARGE SCALE GENOMIC DNA]</scope>
    <source>
        <strain>cv. Columbia</strain>
    </source>
</reference>
<reference key="2">
    <citation type="journal article" date="2017" name="Plant J.">
        <title>Araport11: a complete reannotation of the Arabidopsis thaliana reference genome.</title>
        <authorList>
            <person name="Cheng C.Y."/>
            <person name="Krishnakumar V."/>
            <person name="Chan A.P."/>
            <person name="Thibaud-Nissen F."/>
            <person name="Schobel S."/>
            <person name="Town C.D."/>
        </authorList>
    </citation>
    <scope>GENOME REANNOTATION</scope>
    <source>
        <strain>cv. Columbia</strain>
    </source>
</reference>
<reference key="3">
    <citation type="journal article" date="2003" name="Science">
        <title>Empirical analysis of transcriptional activity in the Arabidopsis genome.</title>
        <authorList>
            <person name="Yamada K."/>
            <person name="Lim J."/>
            <person name="Dale J.M."/>
            <person name="Chen H."/>
            <person name="Shinn P."/>
            <person name="Palm C.J."/>
            <person name="Southwick A.M."/>
            <person name="Wu H.C."/>
            <person name="Kim C.J."/>
            <person name="Nguyen M."/>
            <person name="Pham P.K."/>
            <person name="Cheuk R.F."/>
            <person name="Karlin-Newmann G."/>
            <person name="Liu S.X."/>
            <person name="Lam B."/>
            <person name="Sakano H."/>
            <person name="Wu T."/>
            <person name="Yu G."/>
            <person name="Miranda M."/>
            <person name="Quach H.L."/>
            <person name="Tripp M."/>
            <person name="Chang C.H."/>
            <person name="Lee J.M."/>
            <person name="Toriumi M.J."/>
            <person name="Chan M.M."/>
            <person name="Tang C.C."/>
            <person name="Onodera C.S."/>
            <person name="Deng J.M."/>
            <person name="Akiyama K."/>
            <person name="Ansari Y."/>
            <person name="Arakawa T."/>
            <person name="Banh J."/>
            <person name="Banno F."/>
            <person name="Bowser L."/>
            <person name="Brooks S.Y."/>
            <person name="Carninci P."/>
            <person name="Chao Q."/>
            <person name="Choy N."/>
            <person name="Enju A."/>
            <person name="Goldsmith A.D."/>
            <person name="Gurjal M."/>
            <person name="Hansen N.F."/>
            <person name="Hayashizaki Y."/>
            <person name="Johnson-Hopson C."/>
            <person name="Hsuan V.W."/>
            <person name="Iida K."/>
            <person name="Karnes M."/>
            <person name="Khan S."/>
            <person name="Koesema E."/>
            <person name="Ishida J."/>
            <person name="Jiang P.X."/>
            <person name="Jones T."/>
            <person name="Kawai J."/>
            <person name="Kamiya A."/>
            <person name="Meyers C."/>
            <person name="Nakajima M."/>
            <person name="Narusaka M."/>
            <person name="Seki M."/>
            <person name="Sakurai T."/>
            <person name="Satou M."/>
            <person name="Tamse R."/>
            <person name="Vaysberg M."/>
            <person name="Wallender E.K."/>
            <person name="Wong C."/>
            <person name="Yamamura Y."/>
            <person name="Yuan S."/>
            <person name="Shinozaki K."/>
            <person name="Davis R.W."/>
            <person name="Theologis A."/>
            <person name="Ecker J.R."/>
        </authorList>
    </citation>
    <scope>NUCLEOTIDE SEQUENCE [LARGE SCALE MRNA]</scope>
    <source>
        <strain>cv. Columbia</strain>
    </source>
</reference>
<reference key="4">
    <citation type="submission" date="1993-11" db="EMBL/GenBank/DDBJ databases">
        <title>The Arabidopsis thaliana transcribed genome: the GDR cDNA program.</title>
        <authorList>
            <person name="Raynal M."/>
            <person name="Grellet F."/>
            <person name="Laudie M."/>
            <person name="Meyer Y."/>
            <person name="Cooke R."/>
            <person name="Delseny M."/>
        </authorList>
    </citation>
    <scope>NUCLEOTIDE SEQUENCE [MRNA] OF 1-136; 179-261; 269-383 AND 397-486</scope>
    <source>
        <strain>cv. Columbia</strain>
        <tissue>Dry seed</tissue>
    </source>
</reference>
<reference key="5">
    <citation type="submission" date="2005-03" db="EMBL/GenBank/DDBJ databases">
        <title>Large-scale analysis of RIKEN Arabidopsis full-length (RAFL) cDNAs.</title>
        <authorList>
            <person name="Totoki Y."/>
            <person name="Seki M."/>
            <person name="Ishida J."/>
            <person name="Nakajima M."/>
            <person name="Enju A."/>
            <person name="Kamiya A."/>
            <person name="Narusaka M."/>
            <person name="Shin-i T."/>
            <person name="Nakagawa M."/>
            <person name="Sakamoto N."/>
            <person name="Oishi K."/>
            <person name="Kohara Y."/>
            <person name="Kobayashi M."/>
            <person name="Toyoda A."/>
            <person name="Sakaki Y."/>
            <person name="Sakurai T."/>
            <person name="Iida K."/>
            <person name="Akiyama K."/>
            <person name="Satou M."/>
            <person name="Toyoda T."/>
            <person name="Konagaya A."/>
            <person name="Carninci P."/>
            <person name="Kawai J."/>
            <person name="Hayashizaki Y."/>
            <person name="Shinozaki K."/>
        </authorList>
    </citation>
    <scope>NUCLEOTIDE SEQUENCE [LARGE SCALE MRNA] OF 222-486</scope>
    <source>
        <strain>cv. Columbia</strain>
    </source>
</reference>
<reference key="6">
    <citation type="journal article" date="1994" name="Plant Cell">
        <title>Regulation of gene expression programs during Arabidopsis seed development: roles of the ABI3 locus and of endogenous abscisic acid.</title>
        <authorList>
            <person name="Parcy F."/>
            <person name="Valon C."/>
            <person name="Raynal M."/>
            <person name="Gaubier-Comella P."/>
            <person name="Delseny M."/>
            <person name="Giraudat J."/>
        </authorList>
    </citation>
    <scope>TISSUE SPECIFICITY</scope>
    <source>
        <strain>cv. Landsberg erecta</strain>
    </source>
</reference>
<reference key="7">
    <citation type="journal article" date="2002" name="Plant Cell">
        <title>Redundant proteolytic mechanisms process seed storage proteins in the absence of seed-type members of the vacuolar processing enzyme family of cysteine proteases.</title>
        <authorList>
            <person name="Gruis D.F."/>
            <person name="Selinger D.A."/>
            <person name="Curran J.M."/>
            <person name="Jung R."/>
        </authorList>
    </citation>
    <scope>GENE FAMILY</scope>
</reference>
<reference key="8">
    <citation type="journal article" date="2008" name="BMC Biotechnol.">
        <title>Homologous recombination-mediated cloning and manipulation of genomic DNA regions using Gateway and recombineering systems.</title>
        <authorList>
            <person name="Rozwadowski K."/>
            <person name="Yang W."/>
            <person name="Kagale S."/>
        </authorList>
    </citation>
    <scope>TISSUE SPECIFICITY</scope>
    <scope>DEVELOPMENTAL STAGE</scope>
    <source>
        <strain>cv. Columbia</strain>
    </source>
</reference>
<reference key="9">
    <citation type="journal article" date="2013" name="J. Virol.">
        <title>A vicilin-like seed storage protein, PAP85, is involved in tobacco mosaic virus replication.</title>
        <authorList>
            <person name="Chen C.-E."/>
            <person name="Yeh K.-C."/>
            <person name="Wu S.-H."/>
            <person name="Wang H.-I."/>
            <person name="Yeh H.-H."/>
        </authorList>
    </citation>
    <scope>FUNCTION (MICROBIAL INFECTION)</scope>
    <scope>DISRUPTION PHENOTYPE (MICROBIAL INFECTION)</scope>
    <scope>INDUCTION BY TOBACCO MOSAIC VIRUS (MICROBIAL INFECTION)</scope>
</reference>
<feature type="signal peptide" evidence="1">
    <location>
        <begin position="1"/>
        <end position="22"/>
    </location>
</feature>
<feature type="chain" id="PRO_5004329289" description="Vicilin-like seed storage protein At3g22640" evidence="1">
    <location>
        <begin position="23"/>
        <end position="486"/>
    </location>
</feature>
<feature type="domain" description="Cupin type-1 1" evidence="1">
    <location>
        <begin position="64"/>
        <end position="223"/>
    </location>
</feature>
<feature type="domain" description="Cupin type-1 2" evidence="1">
    <location>
        <begin position="278"/>
        <end position="448"/>
    </location>
</feature>
<feature type="region of interest" description="Disordered" evidence="3">
    <location>
        <begin position="34"/>
        <end position="60"/>
    </location>
</feature>
<feature type="glycosylation site" description="N-linked (GlcNAc...) asparagine" evidence="2">
    <location>
        <position position="168"/>
    </location>
</feature>
<feature type="glycosylation site" description="N-linked (GlcNAc...) asparagine" evidence="2">
    <location>
        <position position="316"/>
    </location>
</feature>
<feature type="glycosylation site" description="N-linked (GlcNAc...) asparagine" evidence="2">
    <location>
        <position position="455"/>
    </location>
</feature>
<feature type="sequence conflict" description="In Ref. 4; CAA81765." evidence="8" ref="4">
    <original>PHH</original>
    <variation>STP</variation>
    <location>
        <begin position="117"/>
        <end position="119"/>
    </location>
</feature>
<feature type="sequence conflict" description="In Ref. 4; CAA81765." evidence="8" ref="4">
    <original>IE</original>
    <variation>MR</variation>
    <location>
        <begin position="135"/>
        <end position="136"/>
    </location>
</feature>
<feature type="sequence conflict" description="In Ref. 4; CAA82813." evidence="8" ref="4">
    <original>TV</original>
    <variation>HR</variation>
    <location>
        <begin position="179"/>
        <end position="180"/>
    </location>
</feature>
<feature type="sequence conflict" description="In Ref. 4; CAA82813." evidence="8" ref="4">
    <original>N</original>
    <variation>D</variation>
    <location>
        <position position="187"/>
    </location>
</feature>
<feature type="sequence conflict" description="In Ref. 5; BAD94983." evidence="8" ref="5">
    <original>E</original>
    <variation>G</variation>
    <location>
        <position position="267"/>
    </location>
</feature>
<feature type="sequence conflict" description="In Ref. 4; CAA81568." evidence="8" ref="4">
    <original>EEEDMSENV</original>
    <variation>GGGRYELKTL</variation>
    <location>
        <begin position="366"/>
        <end position="374"/>
    </location>
</feature>
<feature type="sequence conflict" description="In Ref. 4; CAA81568." evidence="8" ref="4">
    <original>VC</original>
    <variation>SV</variation>
    <location>
        <begin position="381"/>
        <end position="382"/>
    </location>
</feature>
<feature type="sequence conflict" description="In Ref. 4; CAA86672." evidence="8" ref="4">
    <original>Q</original>
    <variation>L</variation>
    <location>
        <position position="402"/>
    </location>
</feature>